<protein>
    <recommendedName>
        <fullName evidence="1">UPF0301 protein Sfri_2850</fullName>
    </recommendedName>
</protein>
<organism>
    <name type="scientific">Shewanella frigidimarina (strain NCIMB 400)</name>
    <dbReference type="NCBI Taxonomy" id="318167"/>
    <lineage>
        <taxon>Bacteria</taxon>
        <taxon>Pseudomonadati</taxon>
        <taxon>Pseudomonadota</taxon>
        <taxon>Gammaproteobacteria</taxon>
        <taxon>Alteromonadales</taxon>
        <taxon>Shewanellaceae</taxon>
        <taxon>Shewanella</taxon>
    </lineage>
</organism>
<reference key="1">
    <citation type="submission" date="2006-08" db="EMBL/GenBank/DDBJ databases">
        <title>Complete sequence of Shewanella frigidimarina NCIMB 400.</title>
        <authorList>
            <consortium name="US DOE Joint Genome Institute"/>
            <person name="Copeland A."/>
            <person name="Lucas S."/>
            <person name="Lapidus A."/>
            <person name="Barry K."/>
            <person name="Detter J.C."/>
            <person name="Glavina del Rio T."/>
            <person name="Hammon N."/>
            <person name="Israni S."/>
            <person name="Dalin E."/>
            <person name="Tice H."/>
            <person name="Pitluck S."/>
            <person name="Fredrickson J.K."/>
            <person name="Kolker E."/>
            <person name="McCuel L.A."/>
            <person name="DiChristina T."/>
            <person name="Nealson K.H."/>
            <person name="Newman D."/>
            <person name="Tiedje J.M."/>
            <person name="Zhou J."/>
            <person name="Romine M.F."/>
            <person name="Culley D.E."/>
            <person name="Serres M."/>
            <person name="Chertkov O."/>
            <person name="Brettin T."/>
            <person name="Bruce D."/>
            <person name="Han C."/>
            <person name="Tapia R."/>
            <person name="Gilna P."/>
            <person name="Schmutz J."/>
            <person name="Larimer F."/>
            <person name="Land M."/>
            <person name="Hauser L."/>
            <person name="Kyrpides N."/>
            <person name="Mikhailova N."/>
            <person name="Richardson P."/>
        </authorList>
    </citation>
    <scope>NUCLEOTIDE SEQUENCE [LARGE SCALE GENOMIC DNA]</scope>
    <source>
        <strain>NCIMB 400</strain>
    </source>
</reference>
<feature type="chain" id="PRO_1000046680" description="UPF0301 protein Sfri_2850">
    <location>
        <begin position="1"/>
        <end position="186"/>
    </location>
</feature>
<sequence>MDSLKDHFLIAMPSLDDTFFERSVIYICEHDQKGAMGLMVNRPIGVEVEDLLEQMELYLSPEFVFSLDSQVLIGGPVAPERGFVLHTPQQHWVNSTEISEDTMLTSSRDILASIGSDKSPENFVVALGYSGWSKDQLEQEIADNTWLTIKATPELLFNVEPEQMWLMATQQLGFDIWQMSSQVGHA</sequence>
<gene>
    <name type="ordered locus">Sfri_2850</name>
</gene>
<dbReference type="EMBL" id="CP000447">
    <property type="protein sequence ID" value="ABI72689.1"/>
    <property type="molecule type" value="Genomic_DNA"/>
</dbReference>
<dbReference type="RefSeq" id="WP_011638298.1">
    <property type="nucleotide sequence ID" value="NC_008345.1"/>
</dbReference>
<dbReference type="SMR" id="Q07Z75"/>
<dbReference type="STRING" id="318167.Sfri_2850"/>
<dbReference type="KEGG" id="sfr:Sfri_2850"/>
<dbReference type="eggNOG" id="COG1678">
    <property type="taxonomic scope" value="Bacteria"/>
</dbReference>
<dbReference type="HOGENOM" id="CLU_057596_1_0_6"/>
<dbReference type="OrthoDB" id="9807486at2"/>
<dbReference type="Proteomes" id="UP000000684">
    <property type="component" value="Chromosome"/>
</dbReference>
<dbReference type="GO" id="GO:0005829">
    <property type="term" value="C:cytosol"/>
    <property type="evidence" value="ECO:0007669"/>
    <property type="project" value="TreeGrafter"/>
</dbReference>
<dbReference type="Gene3D" id="3.40.1740.10">
    <property type="entry name" value="VC0467-like"/>
    <property type="match status" value="1"/>
</dbReference>
<dbReference type="HAMAP" id="MF_00758">
    <property type="entry name" value="UPF0301"/>
    <property type="match status" value="1"/>
</dbReference>
<dbReference type="InterPro" id="IPR003774">
    <property type="entry name" value="AlgH-like"/>
</dbReference>
<dbReference type="NCBIfam" id="NF001266">
    <property type="entry name" value="PRK00228.1-1"/>
    <property type="match status" value="1"/>
</dbReference>
<dbReference type="PANTHER" id="PTHR30327">
    <property type="entry name" value="UNCHARACTERIZED PROTEIN YQGE"/>
    <property type="match status" value="1"/>
</dbReference>
<dbReference type="PANTHER" id="PTHR30327:SF1">
    <property type="entry name" value="UPF0301 PROTEIN YQGE"/>
    <property type="match status" value="1"/>
</dbReference>
<dbReference type="Pfam" id="PF02622">
    <property type="entry name" value="DUF179"/>
    <property type="match status" value="1"/>
</dbReference>
<dbReference type="SUPFAM" id="SSF143456">
    <property type="entry name" value="VC0467-like"/>
    <property type="match status" value="1"/>
</dbReference>
<comment type="similarity">
    <text evidence="1">Belongs to the UPF0301 (AlgH) family.</text>
</comment>
<keyword id="KW-1185">Reference proteome</keyword>
<accession>Q07Z75</accession>
<evidence type="ECO:0000255" key="1">
    <source>
        <dbReference type="HAMAP-Rule" id="MF_00758"/>
    </source>
</evidence>
<name>Y2850_SHEFN</name>
<proteinExistence type="inferred from homology"/>